<proteinExistence type="inferred from homology"/>
<protein>
    <recommendedName>
        <fullName evidence="1">Uroporphyrinogen decarboxylase</fullName>
        <shortName evidence="1">UPD</shortName>
        <shortName evidence="1">URO-D</shortName>
        <ecNumber evidence="1">4.1.1.37</ecNumber>
    </recommendedName>
</protein>
<accession>Q1QJ95</accession>
<evidence type="ECO:0000255" key="1">
    <source>
        <dbReference type="HAMAP-Rule" id="MF_00218"/>
    </source>
</evidence>
<sequence length="350" mass="38556">MAQDSTIKPFLEVLSGRRQAVPPIWMMRQAGRYLPEYRELRAKAGGFLDLCFTPEFAAEVTLQPIRRFAFDAAIIFSDILVIPYALGRSVRFEVGEGPRLDPLDTPDMAATLSREADMTKLEPVFEALRRVRRELDSKTALIGFCGAPWTVATYMVAGRGTPDQAPARMMAYRHPEAFAKIIDVLVENSVRYLLGQLKAGADVLQIFDTWAGVLPPREFARWSIEPTRRIVEGVRKIVPDAKIIGFPRGAGALLPSYIEATGVDAVSIDWAAEPSLVREKVQSRVAVQGNLDPLALIAGGAALDRAVDDVLANFAGGRLIFNLGHGIQPETPIPHVEQMIRRVRGSGLRE</sequence>
<feature type="chain" id="PRO_0000325667" description="Uroporphyrinogen decarboxylase">
    <location>
        <begin position="1"/>
        <end position="350"/>
    </location>
</feature>
<feature type="binding site" evidence="1">
    <location>
        <begin position="28"/>
        <end position="32"/>
    </location>
    <ligand>
        <name>substrate</name>
    </ligand>
</feature>
<feature type="binding site" evidence="1">
    <location>
        <position position="78"/>
    </location>
    <ligand>
        <name>substrate</name>
    </ligand>
</feature>
<feature type="binding site" evidence="1">
    <location>
        <position position="154"/>
    </location>
    <ligand>
        <name>substrate</name>
    </ligand>
</feature>
<feature type="binding site" evidence="1">
    <location>
        <position position="209"/>
    </location>
    <ligand>
        <name>substrate</name>
    </ligand>
</feature>
<feature type="binding site" evidence="1">
    <location>
        <position position="325"/>
    </location>
    <ligand>
        <name>substrate</name>
    </ligand>
</feature>
<feature type="site" description="Transition state stabilizer" evidence="1">
    <location>
        <position position="78"/>
    </location>
</feature>
<comment type="function">
    <text evidence="1">Catalyzes the decarboxylation of four acetate groups of uroporphyrinogen-III to yield coproporphyrinogen-III.</text>
</comment>
<comment type="catalytic activity">
    <reaction evidence="1">
        <text>uroporphyrinogen III + 4 H(+) = coproporphyrinogen III + 4 CO2</text>
        <dbReference type="Rhea" id="RHEA:19865"/>
        <dbReference type="ChEBI" id="CHEBI:15378"/>
        <dbReference type="ChEBI" id="CHEBI:16526"/>
        <dbReference type="ChEBI" id="CHEBI:57308"/>
        <dbReference type="ChEBI" id="CHEBI:57309"/>
        <dbReference type="EC" id="4.1.1.37"/>
    </reaction>
</comment>
<comment type="pathway">
    <text evidence="1">Porphyrin-containing compound metabolism; protoporphyrin-IX biosynthesis; coproporphyrinogen-III from 5-aminolevulinate: step 4/4.</text>
</comment>
<comment type="subunit">
    <text evidence="1">Homodimer.</text>
</comment>
<comment type="subcellular location">
    <subcellularLocation>
        <location evidence="1">Cytoplasm</location>
    </subcellularLocation>
</comment>
<comment type="similarity">
    <text evidence="1">Belongs to the uroporphyrinogen decarboxylase family.</text>
</comment>
<organism>
    <name type="scientific">Nitrobacter hamburgensis (strain DSM 10229 / NCIMB 13809 / X14)</name>
    <dbReference type="NCBI Taxonomy" id="323097"/>
    <lineage>
        <taxon>Bacteria</taxon>
        <taxon>Pseudomonadati</taxon>
        <taxon>Pseudomonadota</taxon>
        <taxon>Alphaproteobacteria</taxon>
        <taxon>Hyphomicrobiales</taxon>
        <taxon>Nitrobacteraceae</taxon>
        <taxon>Nitrobacter</taxon>
    </lineage>
</organism>
<keyword id="KW-0963">Cytoplasm</keyword>
<keyword id="KW-0210">Decarboxylase</keyword>
<keyword id="KW-0456">Lyase</keyword>
<keyword id="KW-0627">Porphyrin biosynthesis</keyword>
<keyword id="KW-1185">Reference proteome</keyword>
<dbReference type="EC" id="4.1.1.37" evidence="1"/>
<dbReference type="EMBL" id="CP000319">
    <property type="protein sequence ID" value="ABE63702.1"/>
    <property type="molecule type" value="Genomic_DNA"/>
</dbReference>
<dbReference type="RefSeq" id="WP_011511365.1">
    <property type="nucleotide sequence ID" value="NC_007964.1"/>
</dbReference>
<dbReference type="SMR" id="Q1QJ95"/>
<dbReference type="STRING" id="323097.Nham_2936"/>
<dbReference type="KEGG" id="nha:Nham_2936"/>
<dbReference type="eggNOG" id="COG0407">
    <property type="taxonomic scope" value="Bacteria"/>
</dbReference>
<dbReference type="HOGENOM" id="CLU_040933_0_0_5"/>
<dbReference type="OrthoDB" id="9806656at2"/>
<dbReference type="UniPathway" id="UPA00251">
    <property type="reaction ID" value="UER00321"/>
</dbReference>
<dbReference type="Proteomes" id="UP000001953">
    <property type="component" value="Chromosome"/>
</dbReference>
<dbReference type="GO" id="GO:0005829">
    <property type="term" value="C:cytosol"/>
    <property type="evidence" value="ECO:0007669"/>
    <property type="project" value="TreeGrafter"/>
</dbReference>
<dbReference type="GO" id="GO:0004853">
    <property type="term" value="F:uroporphyrinogen decarboxylase activity"/>
    <property type="evidence" value="ECO:0007669"/>
    <property type="project" value="UniProtKB-UniRule"/>
</dbReference>
<dbReference type="GO" id="GO:0019353">
    <property type="term" value="P:protoporphyrinogen IX biosynthetic process from glutamate"/>
    <property type="evidence" value="ECO:0007669"/>
    <property type="project" value="TreeGrafter"/>
</dbReference>
<dbReference type="CDD" id="cd00717">
    <property type="entry name" value="URO-D"/>
    <property type="match status" value="1"/>
</dbReference>
<dbReference type="FunFam" id="3.20.20.210:FF:000007">
    <property type="entry name" value="Uroporphyrinogen decarboxylase"/>
    <property type="match status" value="1"/>
</dbReference>
<dbReference type="Gene3D" id="3.20.20.210">
    <property type="match status" value="1"/>
</dbReference>
<dbReference type="HAMAP" id="MF_00218">
    <property type="entry name" value="URO_D"/>
    <property type="match status" value="1"/>
</dbReference>
<dbReference type="InterPro" id="IPR038071">
    <property type="entry name" value="UROD/MetE-like_sf"/>
</dbReference>
<dbReference type="InterPro" id="IPR006361">
    <property type="entry name" value="Uroporphyrinogen_deCO2ase_HemE"/>
</dbReference>
<dbReference type="InterPro" id="IPR000257">
    <property type="entry name" value="Uroporphyrinogen_deCOase"/>
</dbReference>
<dbReference type="NCBIfam" id="TIGR01464">
    <property type="entry name" value="hemE"/>
    <property type="match status" value="1"/>
</dbReference>
<dbReference type="PANTHER" id="PTHR21091">
    <property type="entry name" value="METHYLTETRAHYDROFOLATE:HOMOCYSTEINE METHYLTRANSFERASE RELATED"/>
    <property type="match status" value="1"/>
</dbReference>
<dbReference type="PANTHER" id="PTHR21091:SF169">
    <property type="entry name" value="UROPORPHYRINOGEN DECARBOXYLASE"/>
    <property type="match status" value="1"/>
</dbReference>
<dbReference type="Pfam" id="PF01208">
    <property type="entry name" value="URO-D"/>
    <property type="match status" value="1"/>
</dbReference>
<dbReference type="SUPFAM" id="SSF51726">
    <property type="entry name" value="UROD/MetE-like"/>
    <property type="match status" value="1"/>
</dbReference>
<dbReference type="PROSITE" id="PS00906">
    <property type="entry name" value="UROD_1"/>
    <property type="match status" value="1"/>
</dbReference>
<dbReference type="PROSITE" id="PS00907">
    <property type="entry name" value="UROD_2"/>
    <property type="match status" value="1"/>
</dbReference>
<gene>
    <name evidence="1" type="primary">hemE</name>
    <name type="ordered locus">Nham_2936</name>
</gene>
<reference key="1">
    <citation type="submission" date="2006-03" db="EMBL/GenBank/DDBJ databases">
        <title>Complete sequence of chromosome of Nitrobacter hamburgensis X14.</title>
        <authorList>
            <consortium name="US DOE Joint Genome Institute"/>
            <person name="Copeland A."/>
            <person name="Lucas S."/>
            <person name="Lapidus A."/>
            <person name="Barry K."/>
            <person name="Detter J.C."/>
            <person name="Glavina del Rio T."/>
            <person name="Hammon N."/>
            <person name="Israni S."/>
            <person name="Dalin E."/>
            <person name="Tice H."/>
            <person name="Pitluck S."/>
            <person name="Chain P."/>
            <person name="Malfatti S."/>
            <person name="Shin M."/>
            <person name="Vergez L."/>
            <person name="Schmutz J."/>
            <person name="Larimer F."/>
            <person name="Land M."/>
            <person name="Hauser L."/>
            <person name="Kyrpides N."/>
            <person name="Ivanova N."/>
            <person name="Ward B."/>
            <person name="Arp D."/>
            <person name="Klotz M."/>
            <person name="Stein L."/>
            <person name="O'Mullan G."/>
            <person name="Starkenburg S."/>
            <person name="Sayavedra L."/>
            <person name="Poret-Peterson A.T."/>
            <person name="Gentry M.E."/>
            <person name="Bruce D."/>
            <person name="Richardson P."/>
        </authorList>
    </citation>
    <scope>NUCLEOTIDE SEQUENCE [LARGE SCALE GENOMIC DNA]</scope>
    <source>
        <strain>DSM 10229 / NCIMB 13809 / X14</strain>
    </source>
</reference>
<name>DCUP_NITHX</name>